<proteinExistence type="inferred from homology"/>
<evidence type="ECO:0000255" key="1">
    <source>
        <dbReference type="HAMAP-Rule" id="MF_01708"/>
    </source>
</evidence>
<reference key="1">
    <citation type="submission" date="2005-09" db="EMBL/GenBank/DDBJ databases">
        <title>Complete sequence of chromosome 1 of Rhodobacter sphaeroides 2.4.1.</title>
        <authorList>
            <person name="Copeland A."/>
            <person name="Lucas S."/>
            <person name="Lapidus A."/>
            <person name="Barry K."/>
            <person name="Detter J.C."/>
            <person name="Glavina T."/>
            <person name="Hammon N."/>
            <person name="Israni S."/>
            <person name="Pitluck S."/>
            <person name="Richardson P."/>
            <person name="Mackenzie C."/>
            <person name="Choudhary M."/>
            <person name="Larimer F."/>
            <person name="Hauser L.J."/>
            <person name="Land M."/>
            <person name="Donohue T.J."/>
            <person name="Kaplan S."/>
        </authorList>
    </citation>
    <scope>NUCLEOTIDE SEQUENCE [LARGE SCALE GENOMIC DNA]</scope>
    <source>
        <strain>ATCC 17023 / DSM 158 / JCM 6121 / CCUG 31486 / LMG 2827 / NBRC 12203 / NCIMB 8253 / ATH 2.4.1.</strain>
    </source>
</reference>
<feature type="chain" id="PRO_0000272134" description="Lipoprotein-releasing system ATP-binding protein LolD">
    <location>
        <begin position="1"/>
        <end position="224"/>
    </location>
</feature>
<feature type="domain" description="ABC transporter" evidence="1">
    <location>
        <begin position="5"/>
        <end position="224"/>
    </location>
</feature>
<feature type="binding site" evidence="1">
    <location>
        <begin position="42"/>
        <end position="49"/>
    </location>
    <ligand>
        <name>ATP</name>
        <dbReference type="ChEBI" id="CHEBI:30616"/>
    </ligand>
</feature>
<protein>
    <recommendedName>
        <fullName evidence="1">Lipoprotein-releasing system ATP-binding protein LolD</fullName>
        <ecNumber evidence="1">7.6.2.-</ecNumber>
    </recommendedName>
</protein>
<name>LOLD_CERS4</name>
<dbReference type="EC" id="7.6.2.-" evidence="1"/>
<dbReference type="EMBL" id="CP000143">
    <property type="protein sequence ID" value="ABA79953.1"/>
    <property type="molecule type" value="Genomic_DNA"/>
</dbReference>
<dbReference type="RefSeq" id="WP_011338479.1">
    <property type="nucleotide sequence ID" value="NC_007493.2"/>
</dbReference>
<dbReference type="RefSeq" id="YP_353854.1">
    <property type="nucleotide sequence ID" value="NC_007493.2"/>
</dbReference>
<dbReference type="SMR" id="Q3IZT1"/>
<dbReference type="STRING" id="272943.RSP_0776"/>
<dbReference type="EnsemblBacteria" id="ABA79953">
    <property type="protein sequence ID" value="ABA79953"/>
    <property type="gene ID" value="RSP_0776"/>
</dbReference>
<dbReference type="GeneID" id="3718142"/>
<dbReference type="KEGG" id="rsp:RSP_0776"/>
<dbReference type="PATRIC" id="fig|272943.9.peg.2733"/>
<dbReference type="eggNOG" id="COG1136">
    <property type="taxonomic scope" value="Bacteria"/>
</dbReference>
<dbReference type="OrthoDB" id="9802264at2"/>
<dbReference type="PhylomeDB" id="Q3IZT1"/>
<dbReference type="Proteomes" id="UP000002703">
    <property type="component" value="Chromosome 1"/>
</dbReference>
<dbReference type="GO" id="GO:0005886">
    <property type="term" value="C:plasma membrane"/>
    <property type="evidence" value="ECO:0007669"/>
    <property type="project" value="UniProtKB-SubCell"/>
</dbReference>
<dbReference type="GO" id="GO:0005524">
    <property type="term" value="F:ATP binding"/>
    <property type="evidence" value="ECO:0007669"/>
    <property type="project" value="UniProtKB-KW"/>
</dbReference>
<dbReference type="GO" id="GO:0016887">
    <property type="term" value="F:ATP hydrolysis activity"/>
    <property type="evidence" value="ECO:0007669"/>
    <property type="project" value="InterPro"/>
</dbReference>
<dbReference type="GO" id="GO:0022857">
    <property type="term" value="F:transmembrane transporter activity"/>
    <property type="evidence" value="ECO:0007669"/>
    <property type="project" value="TreeGrafter"/>
</dbReference>
<dbReference type="GO" id="GO:0044874">
    <property type="term" value="P:lipoprotein localization to outer membrane"/>
    <property type="evidence" value="ECO:0007669"/>
    <property type="project" value="TreeGrafter"/>
</dbReference>
<dbReference type="GO" id="GO:0089705">
    <property type="term" value="P:protein localization to outer membrane"/>
    <property type="evidence" value="ECO:0007669"/>
    <property type="project" value="TreeGrafter"/>
</dbReference>
<dbReference type="CDD" id="cd03255">
    <property type="entry name" value="ABC_MJ0796_LolCDE_FtsE"/>
    <property type="match status" value="1"/>
</dbReference>
<dbReference type="Gene3D" id="3.40.50.300">
    <property type="entry name" value="P-loop containing nucleotide triphosphate hydrolases"/>
    <property type="match status" value="1"/>
</dbReference>
<dbReference type="InterPro" id="IPR003593">
    <property type="entry name" value="AAA+_ATPase"/>
</dbReference>
<dbReference type="InterPro" id="IPR003439">
    <property type="entry name" value="ABC_transporter-like_ATP-bd"/>
</dbReference>
<dbReference type="InterPro" id="IPR017871">
    <property type="entry name" value="ABC_transporter-like_CS"/>
</dbReference>
<dbReference type="InterPro" id="IPR015854">
    <property type="entry name" value="ABC_transpr_LolD-like"/>
</dbReference>
<dbReference type="InterPro" id="IPR017911">
    <property type="entry name" value="MacB-like_ATP-bd"/>
</dbReference>
<dbReference type="InterPro" id="IPR027417">
    <property type="entry name" value="P-loop_NTPase"/>
</dbReference>
<dbReference type="PANTHER" id="PTHR24220">
    <property type="entry name" value="IMPORT ATP-BINDING PROTEIN"/>
    <property type="match status" value="1"/>
</dbReference>
<dbReference type="PANTHER" id="PTHR24220:SF689">
    <property type="entry name" value="LIPOPROTEIN-RELEASING SYSTEM ATP-BINDING PROTEIN LOLD"/>
    <property type="match status" value="1"/>
</dbReference>
<dbReference type="Pfam" id="PF00005">
    <property type="entry name" value="ABC_tran"/>
    <property type="match status" value="1"/>
</dbReference>
<dbReference type="SMART" id="SM00382">
    <property type="entry name" value="AAA"/>
    <property type="match status" value="1"/>
</dbReference>
<dbReference type="SUPFAM" id="SSF52540">
    <property type="entry name" value="P-loop containing nucleoside triphosphate hydrolases"/>
    <property type="match status" value="1"/>
</dbReference>
<dbReference type="PROSITE" id="PS00211">
    <property type="entry name" value="ABC_TRANSPORTER_1"/>
    <property type="match status" value="1"/>
</dbReference>
<dbReference type="PROSITE" id="PS50893">
    <property type="entry name" value="ABC_TRANSPORTER_2"/>
    <property type="match status" value="1"/>
</dbReference>
<dbReference type="PROSITE" id="PS51244">
    <property type="entry name" value="LOLD"/>
    <property type="match status" value="1"/>
</dbReference>
<sequence length="224" mass="23572">MSEMLVLDGLTKAYNRGRPGEVTVLRGATLSVGTGEVVALVAPSGAGKSTLLHIAGLLDTPDEGRVAIGGTEMAGLGDRARTGTRRREVGFIYQFHHLLPEFTALENVVLPQLANGVSRRGAEARARDLLGRVGVGAREGHRPAALSGGEQQRVAFCRALANAPRLLLADEPTGNLDPGTSDQVFGVLMDLVRGTGLSALIATHNLELAARMDRVVRLEAGRVV</sequence>
<gene>
    <name evidence="1" type="primary">lolD</name>
    <name type="ordered locus">RHOS4_23850</name>
    <name type="ORF">RSP_0776</name>
</gene>
<keyword id="KW-0067">ATP-binding</keyword>
<keyword id="KW-0997">Cell inner membrane</keyword>
<keyword id="KW-1003">Cell membrane</keyword>
<keyword id="KW-0472">Membrane</keyword>
<keyword id="KW-0547">Nucleotide-binding</keyword>
<keyword id="KW-1185">Reference proteome</keyword>
<keyword id="KW-1278">Translocase</keyword>
<keyword id="KW-0813">Transport</keyword>
<organism>
    <name type="scientific">Cereibacter sphaeroides (strain ATCC 17023 / DSM 158 / JCM 6121 / CCUG 31486 / LMG 2827 / NBRC 12203 / NCIMB 8253 / ATH 2.4.1.)</name>
    <name type="common">Rhodobacter sphaeroides</name>
    <dbReference type="NCBI Taxonomy" id="272943"/>
    <lineage>
        <taxon>Bacteria</taxon>
        <taxon>Pseudomonadati</taxon>
        <taxon>Pseudomonadota</taxon>
        <taxon>Alphaproteobacteria</taxon>
        <taxon>Rhodobacterales</taxon>
        <taxon>Paracoccaceae</taxon>
        <taxon>Cereibacter</taxon>
    </lineage>
</organism>
<accession>Q3IZT1</accession>
<comment type="function">
    <text evidence="1">Part of the ABC transporter complex LolCDE involved in the translocation of mature outer membrane-directed lipoproteins, from the inner membrane to the periplasmic chaperone, LolA. Responsible for the formation of the LolA-lipoprotein complex in an ATP-dependent manner.</text>
</comment>
<comment type="subunit">
    <text evidence="1">The complex is composed of two ATP-binding proteins (LolD) and two transmembrane proteins (LolC and LolE).</text>
</comment>
<comment type="subcellular location">
    <subcellularLocation>
        <location evidence="1">Cell inner membrane</location>
        <topology evidence="1">Peripheral membrane protein</topology>
    </subcellularLocation>
</comment>
<comment type="similarity">
    <text evidence="1">Belongs to the ABC transporter superfamily. Lipoprotein translocase (TC 3.A.1.125) family.</text>
</comment>